<sequence>MINWQVIAQLVSLGVIVLVGPAVIILLSLKRGNL</sequence>
<protein>
    <recommendedName>
        <fullName evidence="1">Photosystem II reaction center protein Psb30</fullName>
    </recommendedName>
    <alternativeName>
        <fullName evidence="1">Photosystem II reaction center protein Ycf12</fullName>
    </alternativeName>
</protein>
<feature type="chain" id="PRO_0000242473" description="Photosystem II reaction center protein Psb30">
    <location>
        <begin position="1"/>
        <end position="34"/>
    </location>
</feature>
<feature type="transmembrane region" description="Helical" evidence="1">
    <location>
        <begin position="6"/>
        <end position="26"/>
    </location>
</feature>
<gene>
    <name evidence="1" type="primary">psb30</name>
    <name evidence="1" type="synonym">ycf12</name>
</gene>
<dbReference type="EMBL" id="AP006715">
    <property type="protein sequence ID" value="BAE92509.1"/>
    <property type="molecule type" value="Genomic_DNA"/>
</dbReference>
<dbReference type="RefSeq" id="YP_537066.1">
    <property type="nucleotide sequence ID" value="NC_007932.1"/>
</dbReference>
<dbReference type="SMR" id="Q1XDA2"/>
<dbReference type="GeneID" id="3978805"/>
<dbReference type="GO" id="GO:0009535">
    <property type="term" value="C:chloroplast thylakoid membrane"/>
    <property type="evidence" value="ECO:0007669"/>
    <property type="project" value="UniProtKB-SubCell"/>
</dbReference>
<dbReference type="GO" id="GO:0009523">
    <property type="term" value="C:photosystem II"/>
    <property type="evidence" value="ECO:0007669"/>
    <property type="project" value="UniProtKB-KW"/>
</dbReference>
<dbReference type="GO" id="GO:0015979">
    <property type="term" value="P:photosynthesis"/>
    <property type="evidence" value="ECO:0007669"/>
    <property type="project" value="UniProtKB-KW"/>
</dbReference>
<dbReference type="HAMAP" id="MF_01329">
    <property type="entry name" value="PSII_Psb30_Ycf12"/>
    <property type="match status" value="1"/>
</dbReference>
<dbReference type="InterPro" id="IPR010284">
    <property type="entry name" value="PSII_Ycf12_core-subunit"/>
</dbReference>
<dbReference type="NCBIfam" id="NF010239">
    <property type="entry name" value="PRK13686.1"/>
    <property type="match status" value="1"/>
</dbReference>
<dbReference type="Pfam" id="PF05969">
    <property type="entry name" value="PSII_Ycf12"/>
    <property type="match status" value="1"/>
</dbReference>
<geneLocation type="chloroplast"/>
<reference key="1">
    <citation type="submission" date="2003-11" db="EMBL/GenBank/DDBJ databases">
        <title>Whole genome sequence of Porphyra yezoensis chloroplast.</title>
        <authorList>
            <person name="Kunimoto M."/>
            <person name="Morishima K."/>
            <person name="Yoshikawa M."/>
            <person name="Fukuda S."/>
            <person name="Kobayashi T."/>
            <person name="Kobayashi M."/>
            <person name="Okazaki T."/>
            <person name="Ohara I."/>
            <person name="Nakayama I."/>
        </authorList>
    </citation>
    <scope>NUCLEOTIDE SEQUENCE [LARGE SCALE GENOMIC DNA]</scope>
    <source>
        <strain>U-51</strain>
    </source>
</reference>
<accession>Q1XDA2</accession>
<organism>
    <name type="scientific">Pyropia yezoensis</name>
    <name type="common">Susabi-nori</name>
    <name type="synonym">Porphyra yezoensis</name>
    <dbReference type="NCBI Taxonomy" id="2788"/>
    <lineage>
        <taxon>Eukaryota</taxon>
        <taxon>Rhodophyta</taxon>
        <taxon>Bangiophyceae</taxon>
        <taxon>Bangiales</taxon>
        <taxon>Bangiaceae</taxon>
        <taxon>Pyropia</taxon>
    </lineage>
</organism>
<keyword id="KW-0150">Chloroplast</keyword>
<keyword id="KW-0472">Membrane</keyword>
<keyword id="KW-0602">Photosynthesis</keyword>
<keyword id="KW-0604">Photosystem II</keyword>
<keyword id="KW-0934">Plastid</keyword>
<keyword id="KW-0793">Thylakoid</keyword>
<keyword id="KW-0812">Transmembrane</keyword>
<keyword id="KW-1133">Transmembrane helix</keyword>
<name>PSB30_PYRYE</name>
<comment type="function">
    <text evidence="1">A core subunit of photosystem II (PSII), probably helps stabilize the reaction center.</text>
</comment>
<comment type="subunit">
    <text evidence="1">PSII is composed of 1 copy each of membrane proteins PsbA, PsbB, PsbC, PsbD, PsbE, PsbF, PsbH, PsbI, PsbJ, PsbK, PsbL, PsbM, PsbT, PsbX, PsbY, PsbZ, Psb30/Ycf12, peripheral proteins of the oxygen-evolving complex and a large number of cofactors. It forms dimeric complexes.</text>
</comment>
<comment type="subcellular location">
    <subcellularLocation>
        <location evidence="1">Plastid</location>
        <location evidence="1">Chloroplast thylakoid membrane</location>
        <topology evidence="1">Single-pass membrane protein</topology>
    </subcellularLocation>
</comment>
<comment type="similarity">
    <text evidence="1">Belongs to the Psb30/Ycf12 family.</text>
</comment>
<evidence type="ECO:0000255" key="1">
    <source>
        <dbReference type="HAMAP-Rule" id="MF_01329"/>
    </source>
</evidence>
<proteinExistence type="inferred from homology"/>